<dbReference type="EMBL" id="D31631">
    <property type="protein sequence ID" value="BAA06503.1"/>
    <property type="molecule type" value="Genomic_DNA"/>
</dbReference>
<dbReference type="PIR" id="JC2305">
    <property type="entry name" value="JC2305"/>
</dbReference>
<dbReference type="SMR" id="P46832"/>
<dbReference type="UniPathway" id="UPA00792"/>
<dbReference type="GO" id="GO:0005886">
    <property type="term" value="C:plasma membrane"/>
    <property type="evidence" value="ECO:0007669"/>
    <property type="project" value="UniProtKB-SubCell"/>
</dbReference>
<dbReference type="GO" id="GO:0015128">
    <property type="term" value="F:gluconate transmembrane transporter activity"/>
    <property type="evidence" value="ECO:0007669"/>
    <property type="project" value="InterPro"/>
</dbReference>
<dbReference type="GO" id="GO:0019521">
    <property type="term" value="P:D-gluconate metabolic process"/>
    <property type="evidence" value="ECO:0007669"/>
    <property type="project" value="UniProtKB-KW"/>
</dbReference>
<dbReference type="InterPro" id="IPR003474">
    <property type="entry name" value="Glcn_transporter"/>
</dbReference>
<dbReference type="NCBIfam" id="TIGR00791">
    <property type="entry name" value="gntP"/>
    <property type="match status" value="1"/>
</dbReference>
<dbReference type="PANTHER" id="PTHR30354">
    <property type="entry name" value="GNT FAMILY GLUCONATE TRANSPORTER"/>
    <property type="match status" value="1"/>
</dbReference>
<dbReference type="PANTHER" id="PTHR30354:SF22">
    <property type="entry name" value="HIGH-AFFINITY GLUCONATE TRANSPORTER"/>
    <property type="match status" value="1"/>
</dbReference>
<dbReference type="Pfam" id="PF02447">
    <property type="entry name" value="GntP_permease"/>
    <property type="match status" value="1"/>
</dbReference>
<dbReference type="PIRSF" id="PIRSF002746">
    <property type="entry name" value="Gluconate_transporter"/>
    <property type="match status" value="1"/>
</dbReference>
<accession>P46832</accession>
<gene>
    <name type="primary">gntP</name>
</gene>
<name>GNTP_BACLI</name>
<evidence type="ECO:0000255" key="1"/>
<evidence type="ECO:0000305" key="2"/>
<sequence>MPLLIVAIGIVALLLLIMGLKLNTFVSLIIVSFGVALALGMPLDDIVKTIEEGLGGTLGHIALIFGLGAMLGRLIADSGGAQRIAMTLVNKFGEENIQWAVVIASFIIGVALFFEVALVLLIPIVFAISKELEISISYLGIPMTAALSVTHGFLPPHPGPTAIAGELGANIGEVLLYGIIVAIPTVLLAGPLFTKLAKKIVPQSFEKMGSIASLGEQKTFKLEETPGFGISVFTAMLPVIIMSISTVITLIQETMGLADNSLLAAVRLIGNASTSMVISLLVAIYTMGIARKIPIKQVMDSCSTAITQIGMMLLIIGGGGAFKQVLINGGVGDYVAELFKGTAMSPILLAWVIAAILRISLGSATVAALSTTGLVLPMLGQSDVNLALVVLATGAGSVIASHVNDAGFWMFKEYFGLSMKETFATWTLLETIIAVAGLGFTLLLSLFV</sequence>
<keyword id="KW-1003">Cell membrane</keyword>
<keyword id="KW-0311">Gluconate utilization</keyword>
<keyword id="KW-0472">Membrane</keyword>
<keyword id="KW-0762">Sugar transport</keyword>
<keyword id="KW-0812">Transmembrane</keyword>
<keyword id="KW-1133">Transmembrane helix</keyword>
<keyword id="KW-0813">Transport</keyword>
<organism>
    <name type="scientific">Bacillus licheniformis</name>
    <dbReference type="NCBI Taxonomy" id="1402"/>
    <lineage>
        <taxon>Bacteria</taxon>
        <taxon>Bacillati</taxon>
        <taxon>Bacillota</taxon>
        <taxon>Bacilli</taxon>
        <taxon>Bacillales</taxon>
        <taxon>Bacillaceae</taxon>
        <taxon>Bacillus</taxon>
    </lineage>
</organism>
<reference key="1">
    <citation type="journal article" date="1994" name="DNA Res.">
        <title>Nucleotide sequence and features of the Bacillus licheniformis gnt operon.</title>
        <authorList>
            <person name="Yoshida K."/>
            <person name="Seki S."/>
            <person name="Fujita Y."/>
        </authorList>
    </citation>
    <scope>NUCLEOTIDE SEQUENCE [GENOMIC DNA]</scope>
    <source>
        <strain>BGSC5A2</strain>
    </source>
</reference>
<feature type="chain" id="PRO_0000061930" description="Gluconate permease">
    <location>
        <begin position="1"/>
        <end position="448"/>
    </location>
</feature>
<feature type="transmembrane region" description="Helical" evidence="1">
    <location>
        <begin position="2"/>
        <end position="22"/>
    </location>
</feature>
<feature type="transmembrane region" description="Helical" evidence="1">
    <location>
        <begin position="23"/>
        <end position="43"/>
    </location>
</feature>
<feature type="transmembrane region" description="Helical" evidence="1">
    <location>
        <begin position="52"/>
        <end position="72"/>
    </location>
</feature>
<feature type="transmembrane region" description="Helical" evidence="1">
    <location>
        <begin position="106"/>
        <end position="126"/>
    </location>
</feature>
<feature type="transmembrane region" description="Helical" evidence="1">
    <location>
        <begin position="134"/>
        <end position="154"/>
    </location>
</feature>
<feature type="transmembrane region" description="Helical" evidence="1">
    <location>
        <begin position="174"/>
        <end position="194"/>
    </location>
</feature>
<feature type="transmembrane region" description="Helical" evidence="1">
    <location>
        <begin position="228"/>
        <end position="248"/>
    </location>
</feature>
<feature type="transmembrane region" description="Helical" evidence="1">
    <location>
        <begin position="269"/>
        <end position="289"/>
    </location>
</feature>
<feature type="transmembrane region" description="Helical" evidence="1">
    <location>
        <begin position="302"/>
        <end position="322"/>
    </location>
</feature>
<feature type="transmembrane region" description="Helical" evidence="1">
    <location>
        <begin position="347"/>
        <end position="367"/>
    </location>
</feature>
<feature type="transmembrane region" description="Helical" evidence="1">
    <location>
        <begin position="373"/>
        <end position="393"/>
    </location>
</feature>
<feature type="transmembrane region" description="Helical" evidence="1">
    <location>
        <begin position="428"/>
        <end position="448"/>
    </location>
</feature>
<proteinExistence type="inferred from homology"/>
<protein>
    <recommendedName>
        <fullName>Gluconate permease</fullName>
    </recommendedName>
</protein>
<comment type="pathway">
    <text>Carbohydrate acid metabolism; D-gluconate degradation.</text>
</comment>
<comment type="subcellular location">
    <subcellularLocation>
        <location>Cell membrane</location>
        <topology>Multi-pass membrane protein</topology>
    </subcellularLocation>
</comment>
<comment type="similarity">
    <text evidence="2">Belongs to the GntP permease family.</text>
</comment>